<evidence type="ECO:0000255" key="1">
    <source>
        <dbReference type="HAMAP-Rule" id="MF_02076"/>
    </source>
</evidence>
<proteinExistence type="inferred from homology"/>
<keyword id="KW-0030">Aminoacyl-tRNA synthetase</keyword>
<keyword id="KW-0067">ATP-binding</keyword>
<keyword id="KW-0963">Cytoplasm</keyword>
<keyword id="KW-0436">Ligase</keyword>
<keyword id="KW-0547">Nucleotide-binding</keyword>
<keyword id="KW-0648">Protein biosynthesis</keyword>
<name>SYE_METS3</name>
<dbReference type="EC" id="6.1.1.17" evidence="1"/>
<dbReference type="EMBL" id="CP000678">
    <property type="protein sequence ID" value="ABQ87657.1"/>
    <property type="molecule type" value="Genomic_DNA"/>
</dbReference>
<dbReference type="RefSeq" id="WP_004035429.1">
    <property type="nucleotide sequence ID" value="NZ_CP117965.1"/>
</dbReference>
<dbReference type="SMR" id="A5UN79"/>
<dbReference type="STRING" id="420247.Msm_1452"/>
<dbReference type="EnsemblBacteria" id="ABQ87657">
    <property type="protein sequence ID" value="ABQ87657"/>
    <property type="gene ID" value="Msm_1452"/>
</dbReference>
<dbReference type="KEGG" id="msi:Msm_1452"/>
<dbReference type="PATRIC" id="fig|420247.28.peg.1445"/>
<dbReference type="eggNOG" id="arCOG04302">
    <property type="taxonomic scope" value="Archaea"/>
</dbReference>
<dbReference type="HOGENOM" id="CLU_001882_1_3_2"/>
<dbReference type="Proteomes" id="UP000001992">
    <property type="component" value="Chromosome"/>
</dbReference>
<dbReference type="GO" id="GO:0005829">
    <property type="term" value="C:cytosol"/>
    <property type="evidence" value="ECO:0007669"/>
    <property type="project" value="TreeGrafter"/>
</dbReference>
<dbReference type="GO" id="GO:0032991">
    <property type="term" value="C:protein-containing complex"/>
    <property type="evidence" value="ECO:0007669"/>
    <property type="project" value="UniProtKB-ARBA"/>
</dbReference>
<dbReference type="GO" id="GO:0005524">
    <property type="term" value="F:ATP binding"/>
    <property type="evidence" value="ECO:0007669"/>
    <property type="project" value="UniProtKB-UniRule"/>
</dbReference>
<dbReference type="GO" id="GO:0004818">
    <property type="term" value="F:glutamate-tRNA ligase activity"/>
    <property type="evidence" value="ECO:0007669"/>
    <property type="project" value="UniProtKB-UniRule"/>
</dbReference>
<dbReference type="GO" id="GO:0043604">
    <property type="term" value="P:amide biosynthetic process"/>
    <property type="evidence" value="ECO:0007669"/>
    <property type="project" value="TreeGrafter"/>
</dbReference>
<dbReference type="GO" id="GO:0006424">
    <property type="term" value="P:glutamyl-tRNA aminoacylation"/>
    <property type="evidence" value="ECO:0007669"/>
    <property type="project" value="UniProtKB-UniRule"/>
</dbReference>
<dbReference type="CDD" id="cd09287">
    <property type="entry name" value="GluRS_non_core"/>
    <property type="match status" value="1"/>
</dbReference>
<dbReference type="Gene3D" id="2.40.240.100">
    <property type="match status" value="1"/>
</dbReference>
<dbReference type="Gene3D" id="3.40.50.620">
    <property type="entry name" value="HUPs"/>
    <property type="match status" value="1"/>
</dbReference>
<dbReference type="Gene3D" id="2.40.240.10">
    <property type="entry name" value="Ribosomal Protein L25, Chain P"/>
    <property type="match status" value="1"/>
</dbReference>
<dbReference type="HAMAP" id="MF_02076">
    <property type="entry name" value="Glu_tRNA_synth_type2"/>
    <property type="match status" value="1"/>
</dbReference>
<dbReference type="InterPro" id="IPR001412">
    <property type="entry name" value="aa-tRNA-synth_I_CS"/>
</dbReference>
<dbReference type="InterPro" id="IPR050132">
    <property type="entry name" value="Gln/Glu-tRNA_Ligase"/>
</dbReference>
<dbReference type="InterPro" id="IPR004526">
    <property type="entry name" value="Glu-tRNA-synth_arc/euk"/>
</dbReference>
<dbReference type="InterPro" id="IPR000924">
    <property type="entry name" value="Glu/Gln-tRNA-synth"/>
</dbReference>
<dbReference type="InterPro" id="IPR020058">
    <property type="entry name" value="Glu/Gln-tRNA-synth_Ib_cat-dom"/>
</dbReference>
<dbReference type="InterPro" id="IPR020059">
    <property type="entry name" value="Glu/Gln-tRNA-synth_Ib_codon-bd"/>
</dbReference>
<dbReference type="InterPro" id="IPR020056">
    <property type="entry name" value="Rbsml_bL25/Gln-tRNA_synth_N"/>
</dbReference>
<dbReference type="InterPro" id="IPR011035">
    <property type="entry name" value="Ribosomal_bL25/Gln-tRNA_synth"/>
</dbReference>
<dbReference type="InterPro" id="IPR014729">
    <property type="entry name" value="Rossmann-like_a/b/a_fold"/>
</dbReference>
<dbReference type="InterPro" id="IPR049437">
    <property type="entry name" value="tRNA-synt_1c_C2"/>
</dbReference>
<dbReference type="NCBIfam" id="TIGR00463">
    <property type="entry name" value="gltX_arch"/>
    <property type="match status" value="1"/>
</dbReference>
<dbReference type="NCBIfam" id="NF003169">
    <property type="entry name" value="PRK04156.1"/>
    <property type="match status" value="1"/>
</dbReference>
<dbReference type="PANTHER" id="PTHR43097:SF5">
    <property type="entry name" value="GLUTAMATE--TRNA LIGASE"/>
    <property type="match status" value="1"/>
</dbReference>
<dbReference type="PANTHER" id="PTHR43097">
    <property type="entry name" value="GLUTAMINE-TRNA LIGASE"/>
    <property type="match status" value="1"/>
</dbReference>
<dbReference type="Pfam" id="PF00749">
    <property type="entry name" value="tRNA-synt_1c"/>
    <property type="match status" value="1"/>
</dbReference>
<dbReference type="Pfam" id="PF03950">
    <property type="entry name" value="tRNA-synt_1c_C"/>
    <property type="match status" value="1"/>
</dbReference>
<dbReference type="Pfam" id="PF20974">
    <property type="entry name" value="tRNA-synt_1c_C2"/>
    <property type="match status" value="1"/>
</dbReference>
<dbReference type="PRINTS" id="PR00987">
    <property type="entry name" value="TRNASYNTHGLU"/>
</dbReference>
<dbReference type="SUPFAM" id="SSF52374">
    <property type="entry name" value="Nucleotidylyl transferase"/>
    <property type="match status" value="1"/>
</dbReference>
<dbReference type="SUPFAM" id="SSF50715">
    <property type="entry name" value="Ribosomal protein L25-like"/>
    <property type="match status" value="1"/>
</dbReference>
<dbReference type="PROSITE" id="PS00178">
    <property type="entry name" value="AA_TRNA_LIGASE_I"/>
    <property type="match status" value="1"/>
</dbReference>
<protein>
    <recommendedName>
        <fullName evidence="1">Glutamate--tRNA ligase</fullName>
        <ecNumber evidence="1">6.1.1.17</ecNumber>
    </recommendedName>
    <alternativeName>
        <fullName evidence="1">Glutamyl-tRNA synthetase</fullName>
        <shortName evidence="1">GluRS</shortName>
    </alternativeName>
</protein>
<organism>
    <name type="scientific">Methanobrevibacter smithii (strain ATCC 35061 / DSM 861 / OCM 144 / PS)</name>
    <dbReference type="NCBI Taxonomy" id="420247"/>
    <lineage>
        <taxon>Archaea</taxon>
        <taxon>Methanobacteriati</taxon>
        <taxon>Methanobacteriota</taxon>
        <taxon>Methanomada group</taxon>
        <taxon>Methanobacteria</taxon>
        <taxon>Methanobacteriales</taxon>
        <taxon>Methanobacteriaceae</taxon>
        <taxon>Methanobrevibacter</taxon>
    </lineage>
</organism>
<reference key="1">
    <citation type="journal article" date="2007" name="Proc. Natl. Acad. Sci. U.S.A.">
        <title>Genomic and metabolic adaptations of Methanobrevibacter smithii to the human gut.</title>
        <authorList>
            <person name="Samuel B.S."/>
            <person name="Hansen E.E."/>
            <person name="Manchester J.K."/>
            <person name="Coutinho P.M."/>
            <person name="Henrissat B."/>
            <person name="Fulton R."/>
            <person name="Latreille P."/>
            <person name="Kim K."/>
            <person name="Wilson R.K."/>
            <person name="Gordon J.I."/>
        </authorList>
    </citation>
    <scope>NUCLEOTIDE SEQUENCE [LARGE SCALE GENOMIC DNA]</scope>
    <source>
        <strain>ATCC 35061 / DSM 861 / OCM 144 / PS</strain>
    </source>
</reference>
<sequence>MNDLEEIVYKHALLNAAKHKGSANPGAVIGSIMSQEPDLRSRAKEIGPIAGKIVAQVNKLSEDEQSAQMAKYHVEVKENKQKKEEGLQELPGSHDNVVMRFAPNPSGPLHIGHARAAVPNAEYVKRYGGKLILRIEDTDPKRVFEPAYDLIPQDLEWLGIKADEVYYQSDRFEIYYDYARQLIEKGAAYMCTCDGATFKELKDNCKPCPCRDNSVEKNLELWDKFDQMHAGEAVLRVKTDINHKNPAIRDWVAMRIVEETHPRLGNKYRVYPMMNFSVAVDDHLMGMSHVLRGKDHLANSEKQKYLYDHMGWDVPEFIHYGRLKMEDIALSTSKALEGISSGKYSGWDDPRLGTLKAIARRGIQPQTIYNLITEIGVKMSDSAISWKKIYGLNRNFLEPIANRYFFVENPVEITVDGYEDGAVDIERPLHADHEDRGNRILPFAGKAYLASEDVKDGISRLMDAVNVDIDGDKITYNSTSFEQARDLKAKIIQWVPVEDNVNVSIVMDDASTKTGLGEGALKDLKVGDVVQFERVGFARLDEIKDNELVFYYAHK</sequence>
<accession>A5UN79</accession>
<gene>
    <name evidence="1" type="primary">gltX</name>
    <name type="ordered locus">Msm_1452</name>
</gene>
<feature type="chain" id="PRO_0000331003" description="Glutamate--tRNA ligase">
    <location>
        <begin position="1"/>
        <end position="555"/>
    </location>
</feature>
<feature type="short sequence motif" description="'HIGH' region" evidence="1">
    <location>
        <begin position="103"/>
        <end position="113"/>
    </location>
</feature>
<comment type="function">
    <text evidence="1">Catalyzes the attachment of glutamate to tRNA(Glu) in a two-step reaction: glutamate is first activated by ATP to form Glu-AMP and then transferred to the acceptor end of tRNA(Glu).</text>
</comment>
<comment type="catalytic activity">
    <reaction evidence="1">
        <text>tRNA(Glu) + L-glutamate + ATP = L-glutamyl-tRNA(Glu) + AMP + diphosphate</text>
        <dbReference type="Rhea" id="RHEA:23540"/>
        <dbReference type="Rhea" id="RHEA-COMP:9663"/>
        <dbReference type="Rhea" id="RHEA-COMP:9680"/>
        <dbReference type="ChEBI" id="CHEBI:29985"/>
        <dbReference type="ChEBI" id="CHEBI:30616"/>
        <dbReference type="ChEBI" id="CHEBI:33019"/>
        <dbReference type="ChEBI" id="CHEBI:78442"/>
        <dbReference type="ChEBI" id="CHEBI:78520"/>
        <dbReference type="ChEBI" id="CHEBI:456215"/>
        <dbReference type="EC" id="6.1.1.17"/>
    </reaction>
</comment>
<comment type="subcellular location">
    <subcellularLocation>
        <location evidence="1">Cytoplasm</location>
    </subcellularLocation>
</comment>
<comment type="similarity">
    <text evidence="1">Belongs to the class-I aminoacyl-tRNA synthetase family. Glutamate--tRNA ligase type 2 subfamily.</text>
</comment>